<accession>Q9HBR0</accession>
<accession>Q6ZRC5</accession>
<accession>Q8NA99</accession>
<accession>Q96C66</accession>
<gene>
    <name evidence="2 9" type="primary">SLC38A10</name>
    <name type="ORF">PP1744</name>
</gene>
<feature type="chain" id="PRO_0000318975" description="Solute carrier family 38 member 10">
    <location>
        <begin position="1"/>
        <end position="1119"/>
    </location>
</feature>
<feature type="transmembrane region" description="Helical" evidence="3">
    <location>
        <begin position="4"/>
        <end position="24"/>
    </location>
</feature>
<feature type="transmembrane region" description="Helical" evidence="3">
    <location>
        <begin position="36"/>
        <end position="58"/>
    </location>
</feature>
<feature type="transmembrane region" description="Helical" evidence="3">
    <location>
        <begin position="84"/>
        <end position="104"/>
    </location>
</feature>
<feature type="transmembrane region" description="Helical" evidence="3">
    <location>
        <begin position="120"/>
        <end position="140"/>
    </location>
</feature>
<feature type="transmembrane region" description="Helical" evidence="3">
    <location>
        <begin position="153"/>
        <end position="173"/>
    </location>
</feature>
<feature type="transmembrane region" description="Helical" evidence="3">
    <location>
        <begin position="229"/>
        <end position="249"/>
    </location>
</feature>
<feature type="transmembrane region" description="Helical" evidence="3">
    <location>
        <begin position="272"/>
        <end position="292"/>
    </location>
</feature>
<feature type="transmembrane region" description="Helical" evidence="3">
    <location>
        <begin position="323"/>
        <end position="343"/>
    </location>
</feature>
<feature type="transmembrane region" description="Helical" evidence="3">
    <location>
        <begin position="345"/>
        <end position="365"/>
    </location>
</feature>
<feature type="transmembrane region" description="Helical" evidence="3">
    <location>
        <begin position="378"/>
        <end position="398"/>
    </location>
</feature>
<feature type="region of interest" description="Disordered" evidence="4">
    <location>
        <begin position="438"/>
        <end position="691"/>
    </location>
</feature>
<feature type="region of interest" description="Disordered" evidence="4">
    <location>
        <begin position="731"/>
        <end position="1071"/>
    </location>
</feature>
<feature type="compositionally biased region" description="Basic and acidic residues" evidence="4">
    <location>
        <begin position="439"/>
        <end position="454"/>
    </location>
</feature>
<feature type="compositionally biased region" description="Basic and acidic residues" evidence="4">
    <location>
        <begin position="466"/>
        <end position="475"/>
    </location>
</feature>
<feature type="compositionally biased region" description="Basic and acidic residues" evidence="4">
    <location>
        <begin position="493"/>
        <end position="522"/>
    </location>
</feature>
<feature type="compositionally biased region" description="Basic and acidic residues" evidence="4">
    <location>
        <begin position="544"/>
        <end position="559"/>
    </location>
</feature>
<feature type="compositionally biased region" description="Basic and acidic residues" evidence="4">
    <location>
        <begin position="592"/>
        <end position="603"/>
    </location>
</feature>
<feature type="compositionally biased region" description="Pro residues" evidence="4">
    <location>
        <begin position="652"/>
        <end position="667"/>
    </location>
</feature>
<feature type="compositionally biased region" description="Basic and acidic residues" evidence="4">
    <location>
        <begin position="668"/>
        <end position="677"/>
    </location>
</feature>
<feature type="compositionally biased region" description="Basic and acidic residues" evidence="4">
    <location>
        <begin position="731"/>
        <end position="752"/>
    </location>
</feature>
<feature type="compositionally biased region" description="Basic and acidic residues" evidence="4">
    <location>
        <begin position="763"/>
        <end position="773"/>
    </location>
</feature>
<feature type="compositionally biased region" description="Basic and acidic residues" evidence="4">
    <location>
        <begin position="832"/>
        <end position="841"/>
    </location>
</feature>
<feature type="compositionally biased region" description="Basic and acidic residues" evidence="4">
    <location>
        <begin position="863"/>
        <end position="876"/>
    </location>
</feature>
<feature type="compositionally biased region" description="Polar residues" evidence="4">
    <location>
        <begin position="880"/>
        <end position="889"/>
    </location>
</feature>
<feature type="compositionally biased region" description="Basic and acidic residues" evidence="4">
    <location>
        <begin position="975"/>
        <end position="1005"/>
    </location>
</feature>
<feature type="compositionally biased region" description="Basic and acidic residues" evidence="4">
    <location>
        <begin position="1012"/>
        <end position="1022"/>
    </location>
</feature>
<feature type="compositionally biased region" description="Basic and acidic residues" evidence="4">
    <location>
        <begin position="1033"/>
        <end position="1042"/>
    </location>
</feature>
<feature type="modified residue" description="Phosphoserine" evidence="2">
    <location>
        <position position="612"/>
    </location>
</feature>
<feature type="modified residue" description="Phosphothreonine" evidence="10">
    <location>
        <position position="772"/>
    </location>
</feature>
<feature type="modified residue" description="Phosphoserine" evidence="10">
    <location>
        <position position="802"/>
    </location>
</feature>
<feature type="modified residue" description="Phosphoserine" evidence="1">
    <location>
        <position position="889"/>
    </location>
</feature>
<feature type="modified residue" description="Phosphoserine" evidence="10">
    <location>
        <position position="965"/>
    </location>
</feature>
<feature type="modified residue" description="Phosphoserine" evidence="10">
    <location>
        <position position="997"/>
    </location>
</feature>
<feature type="splice variant" id="VSP_031323" description="In isoform 3." evidence="6">
    <location>
        <begin position="1"/>
        <end position="82"/>
    </location>
</feature>
<feature type="splice variant" id="VSP_031324" description="In isoform 2." evidence="6 7">
    <original>EAGRAEMLDHAVLLQVIKEQQVQQKRLLDQQEKLLAVIEEQHKEIHQQRQEDEEDKPRQVEVHQEPGAAVPRGQEAPEGKARETVENLPPLP</original>
    <variation>GKASALQPPASGPGSGSPLPQPWGDAQVILGSPARPPFSFQPPAEQTPRRAFCSLPISSLLSGNLLSALLPFKHLRHRHMACDYRFISLAPL</variation>
    <location>
        <begin position="689"/>
        <end position="780"/>
    </location>
</feature>
<feature type="splice variant" id="VSP_031325" description="In isoform 3." evidence="6">
    <original>K</original>
    <variation>S</variation>
    <location>
        <position position="768"/>
    </location>
</feature>
<feature type="splice variant" id="VSP_031326" description="In isoform 3." evidence="6">
    <location>
        <begin position="769"/>
        <end position="1119"/>
    </location>
</feature>
<feature type="splice variant" id="VSP_031327" description="In isoform 2." evidence="6 7">
    <location>
        <begin position="781"/>
        <end position="1119"/>
    </location>
</feature>
<feature type="sequence variant" id="VAR_048126" description="In dbSNP:rs35546507.">
    <original>K</original>
    <variation>R</variation>
    <location>
        <position position="559"/>
    </location>
</feature>
<feature type="sequence variant" id="VAR_038927" description="In dbSNP:rs2725405." evidence="5">
    <original>A</original>
    <variation>G</variation>
    <location>
        <position position="831"/>
    </location>
</feature>
<feature type="sequence conflict" description="In Ref. 5; AAG17235." evidence="8" ref="5">
    <location>
        <position position="1071"/>
    </location>
</feature>
<evidence type="ECO:0000250" key="1">
    <source>
        <dbReference type="UniProtKB" id="E9PT23"/>
    </source>
</evidence>
<evidence type="ECO:0000250" key="2">
    <source>
        <dbReference type="UniProtKB" id="Q5I012"/>
    </source>
</evidence>
<evidence type="ECO:0000255" key="3"/>
<evidence type="ECO:0000256" key="4">
    <source>
        <dbReference type="SAM" id="MobiDB-lite"/>
    </source>
</evidence>
<evidence type="ECO:0000269" key="5">
    <source>
    </source>
</evidence>
<evidence type="ECO:0000303" key="6">
    <source>
    </source>
</evidence>
<evidence type="ECO:0000303" key="7">
    <source>
    </source>
</evidence>
<evidence type="ECO:0000305" key="8"/>
<evidence type="ECO:0000312" key="9">
    <source>
        <dbReference type="HGNC" id="HGNC:28237"/>
    </source>
</evidence>
<evidence type="ECO:0007744" key="10">
    <source>
    </source>
</evidence>
<name>S38AA_HUMAN</name>
<dbReference type="EMBL" id="AK093037">
    <property type="protein sequence ID" value="BAC04027.1"/>
    <property type="status" value="ALT_INIT"/>
    <property type="molecule type" value="mRNA"/>
</dbReference>
<dbReference type="EMBL" id="AK128330">
    <property type="protein sequence ID" value="BAC87387.1"/>
    <property type="molecule type" value="mRNA"/>
</dbReference>
<dbReference type="EMBL" id="AC027601">
    <property type="status" value="NOT_ANNOTATED_CDS"/>
    <property type="molecule type" value="Genomic_DNA"/>
</dbReference>
<dbReference type="EMBL" id="CH471099">
    <property type="protein sequence ID" value="EAW89643.1"/>
    <property type="molecule type" value="Genomic_DNA"/>
</dbReference>
<dbReference type="EMBL" id="BC014642">
    <property type="protein sequence ID" value="AAH14642.1"/>
    <property type="molecule type" value="mRNA"/>
</dbReference>
<dbReference type="EMBL" id="AF217993">
    <property type="protein sequence ID" value="AAG17235.1"/>
    <property type="status" value="ALT_INIT"/>
    <property type="molecule type" value="mRNA"/>
</dbReference>
<dbReference type="CCDS" id="CCDS11780.1">
    <molecule id="Q9HBR0-2"/>
</dbReference>
<dbReference type="CCDS" id="CCDS42397.1">
    <molecule id="Q9HBR0-1"/>
</dbReference>
<dbReference type="RefSeq" id="NP_001033073.1">
    <molecule id="Q9HBR0-1"/>
    <property type="nucleotide sequence ID" value="NM_001037984.3"/>
</dbReference>
<dbReference type="RefSeq" id="NP_612637.1">
    <molecule id="Q9HBR0-2"/>
    <property type="nucleotide sequence ID" value="NM_138570.4"/>
</dbReference>
<dbReference type="SMR" id="Q9HBR0"/>
<dbReference type="BioGRID" id="125874">
    <property type="interactions" value="108"/>
</dbReference>
<dbReference type="FunCoup" id="Q9HBR0">
    <property type="interactions" value="881"/>
</dbReference>
<dbReference type="IntAct" id="Q9HBR0">
    <property type="interactions" value="56"/>
</dbReference>
<dbReference type="MINT" id="Q9HBR0"/>
<dbReference type="STRING" id="9606.ENSP00000363891"/>
<dbReference type="TCDB" id="2.A.18.6.16">
    <property type="family name" value="the amino acid/auxin permease (aaap) family"/>
</dbReference>
<dbReference type="GlyCosmos" id="Q9HBR0">
    <property type="glycosylation" value="3 sites, 1 glycan"/>
</dbReference>
<dbReference type="GlyGen" id="Q9HBR0">
    <property type="glycosylation" value="17 sites, 2 O-linked glycans (17 sites)"/>
</dbReference>
<dbReference type="iPTMnet" id="Q9HBR0"/>
<dbReference type="PhosphoSitePlus" id="Q9HBR0"/>
<dbReference type="SwissPalm" id="Q9HBR0"/>
<dbReference type="BioMuta" id="SLC38A10"/>
<dbReference type="DMDM" id="172045932"/>
<dbReference type="jPOST" id="Q9HBR0"/>
<dbReference type="MassIVE" id="Q9HBR0"/>
<dbReference type="PaxDb" id="9606-ENSP00000363891"/>
<dbReference type="PeptideAtlas" id="Q9HBR0"/>
<dbReference type="ProteomicsDB" id="81585">
    <molecule id="Q9HBR0-1"/>
</dbReference>
<dbReference type="ProteomicsDB" id="81586">
    <molecule id="Q9HBR0-2"/>
</dbReference>
<dbReference type="ProteomicsDB" id="81587">
    <molecule id="Q9HBR0-3"/>
</dbReference>
<dbReference type="Pumba" id="Q9HBR0"/>
<dbReference type="Antibodypedia" id="19805">
    <property type="antibodies" value="34 antibodies from 9 providers"/>
</dbReference>
<dbReference type="DNASU" id="124565"/>
<dbReference type="Ensembl" id="ENST00000288439.9">
    <molecule id="Q9HBR0-2"/>
    <property type="protein sequence ID" value="ENSP00000288439.5"/>
    <property type="gene ID" value="ENSG00000157637.13"/>
</dbReference>
<dbReference type="Ensembl" id="ENST00000374759.8">
    <molecule id="Q9HBR0-1"/>
    <property type="protein sequence ID" value="ENSP00000363891.3"/>
    <property type="gene ID" value="ENSG00000157637.13"/>
</dbReference>
<dbReference type="GeneID" id="124565"/>
<dbReference type="KEGG" id="hsa:124565"/>
<dbReference type="MANE-Select" id="ENST00000374759.8">
    <property type="protein sequence ID" value="ENSP00000363891.3"/>
    <property type="RefSeq nucleotide sequence ID" value="NM_001037984.3"/>
    <property type="RefSeq protein sequence ID" value="NP_001033073.1"/>
</dbReference>
<dbReference type="UCSC" id="uc002jzz.3">
    <molecule id="Q9HBR0-1"/>
    <property type="organism name" value="human"/>
</dbReference>
<dbReference type="AGR" id="HGNC:28237"/>
<dbReference type="CTD" id="124565"/>
<dbReference type="DisGeNET" id="124565"/>
<dbReference type="GeneCards" id="SLC38A10"/>
<dbReference type="HGNC" id="HGNC:28237">
    <property type="gene designation" value="SLC38A10"/>
</dbReference>
<dbReference type="HPA" id="ENSG00000157637">
    <property type="expression patterns" value="Low tissue specificity"/>
</dbReference>
<dbReference type="MIM" id="616525">
    <property type="type" value="gene"/>
</dbReference>
<dbReference type="neXtProt" id="NX_Q9HBR0"/>
<dbReference type="OpenTargets" id="ENSG00000157637"/>
<dbReference type="PharmGKB" id="PA162403738"/>
<dbReference type="VEuPathDB" id="HostDB:ENSG00000157637"/>
<dbReference type="eggNOG" id="KOG1305">
    <property type="taxonomic scope" value="Eukaryota"/>
</dbReference>
<dbReference type="GeneTree" id="ENSGT00940000159369"/>
<dbReference type="HOGENOM" id="CLU_009020_6_0_1"/>
<dbReference type="InParanoid" id="Q9HBR0"/>
<dbReference type="OMA" id="PRMKPKQ"/>
<dbReference type="OrthoDB" id="513400at2759"/>
<dbReference type="PAN-GO" id="Q9HBR0">
    <property type="GO annotations" value="2 GO annotations based on evolutionary models"/>
</dbReference>
<dbReference type="PhylomeDB" id="Q9HBR0"/>
<dbReference type="TreeFam" id="TF320116"/>
<dbReference type="PathwayCommons" id="Q9HBR0"/>
<dbReference type="SignaLink" id="Q9HBR0"/>
<dbReference type="BioGRID-ORCS" id="124565">
    <property type="hits" value="31 hits in 1159 CRISPR screens"/>
</dbReference>
<dbReference type="ChiTaRS" id="SLC38A10">
    <property type="organism name" value="human"/>
</dbReference>
<dbReference type="GeneWiki" id="SLC38A10"/>
<dbReference type="GenomeRNAi" id="124565"/>
<dbReference type="Pharos" id="Q9HBR0">
    <property type="development level" value="Tdark"/>
</dbReference>
<dbReference type="PRO" id="PR:Q9HBR0"/>
<dbReference type="Proteomes" id="UP000005640">
    <property type="component" value="Chromosome 17"/>
</dbReference>
<dbReference type="RNAct" id="Q9HBR0">
    <property type="molecule type" value="protein"/>
</dbReference>
<dbReference type="Bgee" id="ENSG00000157637">
    <property type="expression patterns" value="Expressed in adenohypophysis and 177 other cell types or tissues"/>
</dbReference>
<dbReference type="ExpressionAtlas" id="Q9HBR0">
    <property type="expression patterns" value="baseline and differential"/>
</dbReference>
<dbReference type="GO" id="GO:0005794">
    <property type="term" value="C:Golgi apparatus"/>
    <property type="evidence" value="ECO:0000314"/>
    <property type="project" value="HPA"/>
</dbReference>
<dbReference type="GO" id="GO:0016020">
    <property type="term" value="C:membrane"/>
    <property type="evidence" value="ECO:0000318"/>
    <property type="project" value="GO_Central"/>
</dbReference>
<dbReference type="GO" id="GO:0015179">
    <property type="term" value="F:L-amino acid transmembrane transporter activity"/>
    <property type="evidence" value="ECO:0000318"/>
    <property type="project" value="GO_Central"/>
</dbReference>
<dbReference type="GO" id="GO:0003333">
    <property type="term" value="P:amino acid transmembrane transport"/>
    <property type="evidence" value="ECO:0000318"/>
    <property type="project" value="GO_Central"/>
</dbReference>
<dbReference type="GO" id="GO:0060348">
    <property type="term" value="P:bone development"/>
    <property type="evidence" value="ECO:0007669"/>
    <property type="project" value="Ensembl"/>
</dbReference>
<dbReference type="InterPro" id="IPR013057">
    <property type="entry name" value="AA_transpt_TM"/>
</dbReference>
<dbReference type="PANTHER" id="PTHR22950">
    <property type="entry name" value="AMINO ACID TRANSPORTER"/>
    <property type="match status" value="1"/>
</dbReference>
<dbReference type="PANTHER" id="PTHR22950:SF646">
    <property type="entry name" value="SODIUM-COUPLED NEUTRAL AMINO ACID TRANSPORTER 10-RELATED"/>
    <property type="match status" value="1"/>
</dbReference>
<dbReference type="Pfam" id="PF01490">
    <property type="entry name" value="Aa_trans"/>
    <property type="match status" value="1"/>
</dbReference>
<reference key="1">
    <citation type="journal article" date="2004" name="Nat. Genet.">
        <title>Complete sequencing and characterization of 21,243 full-length human cDNAs.</title>
        <authorList>
            <person name="Ota T."/>
            <person name="Suzuki Y."/>
            <person name="Nishikawa T."/>
            <person name="Otsuki T."/>
            <person name="Sugiyama T."/>
            <person name="Irie R."/>
            <person name="Wakamatsu A."/>
            <person name="Hayashi K."/>
            <person name="Sato H."/>
            <person name="Nagai K."/>
            <person name="Kimura K."/>
            <person name="Makita H."/>
            <person name="Sekine M."/>
            <person name="Obayashi M."/>
            <person name="Nishi T."/>
            <person name="Shibahara T."/>
            <person name="Tanaka T."/>
            <person name="Ishii S."/>
            <person name="Yamamoto J."/>
            <person name="Saito K."/>
            <person name="Kawai Y."/>
            <person name="Isono Y."/>
            <person name="Nakamura Y."/>
            <person name="Nagahari K."/>
            <person name="Murakami K."/>
            <person name="Yasuda T."/>
            <person name="Iwayanagi T."/>
            <person name="Wagatsuma M."/>
            <person name="Shiratori A."/>
            <person name="Sudo H."/>
            <person name="Hosoiri T."/>
            <person name="Kaku Y."/>
            <person name="Kodaira H."/>
            <person name="Kondo H."/>
            <person name="Sugawara M."/>
            <person name="Takahashi M."/>
            <person name="Kanda K."/>
            <person name="Yokoi T."/>
            <person name="Furuya T."/>
            <person name="Kikkawa E."/>
            <person name="Omura Y."/>
            <person name="Abe K."/>
            <person name="Kamihara K."/>
            <person name="Katsuta N."/>
            <person name="Sato K."/>
            <person name="Tanikawa M."/>
            <person name="Yamazaki M."/>
            <person name="Ninomiya K."/>
            <person name="Ishibashi T."/>
            <person name="Yamashita H."/>
            <person name="Murakawa K."/>
            <person name="Fujimori K."/>
            <person name="Tanai H."/>
            <person name="Kimata M."/>
            <person name="Watanabe M."/>
            <person name="Hiraoka S."/>
            <person name="Chiba Y."/>
            <person name="Ishida S."/>
            <person name="Ono Y."/>
            <person name="Takiguchi S."/>
            <person name="Watanabe S."/>
            <person name="Yosida M."/>
            <person name="Hotuta T."/>
            <person name="Kusano J."/>
            <person name="Kanehori K."/>
            <person name="Takahashi-Fujii A."/>
            <person name="Hara H."/>
            <person name="Tanase T.-O."/>
            <person name="Nomura Y."/>
            <person name="Togiya S."/>
            <person name="Komai F."/>
            <person name="Hara R."/>
            <person name="Takeuchi K."/>
            <person name="Arita M."/>
            <person name="Imose N."/>
            <person name="Musashino K."/>
            <person name="Yuuki H."/>
            <person name="Oshima A."/>
            <person name="Sasaki N."/>
            <person name="Aotsuka S."/>
            <person name="Yoshikawa Y."/>
            <person name="Matsunawa H."/>
            <person name="Ichihara T."/>
            <person name="Shiohata N."/>
            <person name="Sano S."/>
            <person name="Moriya S."/>
            <person name="Momiyama H."/>
            <person name="Satoh N."/>
            <person name="Takami S."/>
            <person name="Terashima Y."/>
            <person name="Suzuki O."/>
            <person name="Nakagawa S."/>
            <person name="Senoh A."/>
            <person name="Mizoguchi H."/>
            <person name="Goto Y."/>
            <person name="Shimizu F."/>
            <person name="Wakebe H."/>
            <person name="Hishigaki H."/>
            <person name="Watanabe T."/>
            <person name="Sugiyama A."/>
            <person name="Takemoto M."/>
            <person name="Kawakami B."/>
            <person name="Yamazaki M."/>
            <person name="Watanabe K."/>
            <person name="Kumagai A."/>
            <person name="Itakura S."/>
            <person name="Fukuzumi Y."/>
            <person name="Fujimori Y."/>
            <person name="Komiyama M."/>
            <person name="Tashiro H."/>
            <person name="Tanigami A."/>
            <person name="Fujiwara T."/>
            <person name="Ono T."/>
            <person name="Yamada K."/>
            <person name="Fujii Y."/>
            <person name="Ozaki K."/>
            <person name="Hirao M."/>
            <person name="Ohmori Y."/>
            <person name="Kawabata A."/>
            <person name="Hikiji T."/>
            <person name="Kobatake N."/>
            <person name="Inagaki H."/>
            <person name="Ikema Y."/>
            <person name="Okamoto S."/>
            <person name="Okitani R."/>
            <person name="Kawakami T."/>
            <person name="Noguchi S."/>
            <person name="Itoh T."/>
            <person name="Shigeta K."/>
            <person name="Senba T."/>
            <person name="Matsumura K."/>
            <person name="Nakajima Y."/>
            <person name="Mizuno T."/>
            <person name="Morinaga M."/>
            <person name="Sasaki M."/>
            <person name="Togashi T."/>
            <person name="Oyama M."/>
            <person name="Hata H."/>
            <person name="Watanabe M."/>
            <person name="Komatsu T."/>
            <person name="Mizushima-Sugano J."/>
            <person name="Satoh T."/>
            <person name="Shirai Y."/>
            <person name="Takahashi Y."/>
            <person name="Nakagawa K."/>
            <person name="Okumura K."/>
            <person name="Nagase T."/>
            <person name="Nomura N."/>
            <person name="Kikuchi H."/>
            <person name="Masuho Y."/>
            <person name="Yamashita R."/>
            <person name="Nakai K."/>
            <person name="Yada T."/>
            <person name="Nakamura Y."/>
            <person name="Ohara O."/>
            <person name="Isogai T."/>
            <person name="Sugano S."/>
        </authorList>
    </citation>
    <scope>NUCLEOTIDE SEQUENCE [LARGE SCALE MRNA] (ISOFORM 3)</scope>
    <scope>NUCLEOTIDE SEQUENCE [LARGE SCALE MRNA] OF 209-1119 (ISOFORM 2)</scope>
    <source>
        <tissue>Thymus</tissue>
    </source>
</reference>
<reference key="2">
    <citation type="journal article" date="2006" name="Nature">
        <title>DNA sequence of human chromosome 17 and analysis of rearrangement in the human lineage.</title>
        <authorList>
            <person name="Zody M.C."/>
            <person name="Garber M."/>
            <person name="Adams D.J."/>
            <person name="Sharpe T."/>
            <person name="Harrow J."/>
            <person name="Lupski J.R."/>
            <person name="Nicholson C."/>
            <person name="Searle S.M."/>
            <person name="Wilming L."/>
            <person name="Young S.K."/>
            <person name="Abouelleil A."/>
            <person name="Allen N.R."/>
            <person name="Bi W."/>
            <person name="Bloom T."/>
            <person name="Borowsky M.L."/>
            <person name="Bugalter B.E."/>
            <person name="Butler J."/>
            <person name="Chang J.L."/>
            <person name="Chen C.-K."/>
            <person name="Cook A."/>
            <person name="Corum B."/>
            <person name="Cuomo C.A."/>
            <person name="de Jong P.J."/>
            <person name="DeCaprio D."/>
            <person name="Dewar K."/>
            <person name="FitzGerald M."/>
            <person name="Gilbert J."/>
            <person name="Gibson R."/>
            <person name="Gnerre S."/>
            <person name="Goldstein S."/>
            <person name="Grafham D.V."/>
            <person name="Grocock R."/>
            <person name="Hafez N."/>
            <person name="Hagopian D.S."/>
            <person name="Hart E."/>
            <person name="Norman C.H."/>
            <person name="Humphray S."/>
            <person name="Jaffe D.B."/>
            <person name="Jones M."/>
            <person name="Kamal M."/>
            <person name="Khodiyar V.K."/>
            <person name="LaButti K."/>
            <person name="Laird G."/>
            <person name="Lehoczky J."/>
            <person name="Liu X."/>
            <person name="Lokyitsang T."/>
            <person name="Loveland J."/>
            <person name="Lui A."/>
            <person name="Macdonald P."/>
            <person name="Major J.E."/>
            <person name="Matthews L."/>
            <person name="Mauceli E."/>
            <person name="McCarroll S.A."/>
            <person name="Mihalev A.H."/>
            <person name="Mudge J."/>
            <person name="Nguyen C."/>
            <person name="Nicol R."/>
            <person name="O'Leary S.B."/>
            <person name="Osoegawa K."/>
            <person name="Schwartz D.C."/>
            <person name="Shaw-Smith C."/>
            <person name="Stankiewicz P."/>
            <person name="Steward C."/>
            <person name="Swarbreck D."/>
            <person name="Venkataraman V."/>
            <person name="Whittaker C.A."/>
            <person name="Yang X."/>
            <person name="Zimmer A.R."/>
            <person name="Bradley A."/>
            <person name="Hubbard T."/>
            <person name="Birren B.W."/>
            <person name="Rogers J."/>
            <person name="Lander E.S."/>
            <person name="Nusbaum C."/>
        </authorList>
    </citation>
    <scope>NUCLEOTIDE SEQUENCE [LARGE SCALE GENOMIC DNA]</scope>
</reference>
<reference key="3">
    <citation type="submission" date="2005-07" db="EMBL/GenBank/DDBJ databases">
        <authorList>
            <person name="Mural R.J."/>
            <person name="Istrail S."/>
            <person name="Sutton G.G."/>
            <person name="Florea L."/>
            <person name="Halpern A.L."/>
            <person name="Mobarry C.M."/>
            <person name="Lippert R."/>
            <person name="Walenz B."/>
            <person name="Shatkay H."/>
            <person name="Dew I."/>
            <person name="Miller J.R."/>
            <person name="Flanigan M.J."/>
            <person name="Edwards N.J."/>
            <person name="Bolanos R."/>
            <person name="Fasulo D."/>
            <person name="Halldorsson B.V."/>
            <person name="Hannenhalli S."/>
            <person name="Turner R."/>
            <person name="Yooseph S."/>
            <person name="Lu F."/>
            <person name="Nusskern D.R."/>
            <person name="Shue B.C."/>
            <person name="Zheng X.H."/>
            <person name="Zhong F."/>
            <person name="Delcher A.L."/>
            <person name="Huson D.H."/>
            <person name="Kravitz S.A."/>
            <person name="Mouchard L."/>
            <person name="Reinert K."/>
            <person name="Remington K.A."/>
            <person name="Clark A.G."/>
            <person name="Waterman M.S."/>
            <person name="Eichler E.E."/>
            <person name="Adams M.D."/>
            <person name="Hunkapiller M.W."/>
            <person name="Myers E.W."/>
            <person name="Venter J.C."/>
        </authorList>
    </citation>
    <scope>NUCLEOTIDE SEQUENCE [LARGE SCALE GENOMIC DNA]</scope>
</reference>
<reference key="4">
    <citation type="journal article" date="2004" name="Genome Res.">
        <title>The status, quality, and expansion of the NIH full-length cDNA project: the Mammalian Gene Collection (MGC).</title>
        <authorList>
            <consortium name="The MGC Project Team"/>
        </authorList>
    </citation>
    <scope>NUCLEOTIDE SEQUENCE [LARGE SCALE MRNA] (ISOFORM 2)</scope>
    <source>
        <tissue>Muscle</tissue>
    </source>
</reference>
<reference key="5">
    <citation type="journal article" date="2004" name="Proc. Natl. Acad. Sci. U.S.A.">
        <title>Large-scale cDNA transfection screening for genes related to cancer development and progression.</title>
        <authorList>
            <person name="Wan D."/>
            <person name="Gong Y."/>
            <person name="Qin W."/>
            <person name="Zhang P."/>
            <person name="Li J."/>
            <person name="Wei L."/>
            <person name="Zhou X."/>
            <person name="Li H."/>
            <person name="Qiu X."/>
            <person name="Zhong F."/>
            <person name="He L."/>
            <person name="Yu J."/>
            <person name="Yao G."/>
            <person name="Jiang H."/>
            <person name="Qian L."/>
            <person name="Yu Y."/>
            <person name="Shu H."/>
            <person name="Chen X."/>
            <person name="Xu H."/>
            <person name="Guo M."/>
            <person name="Pan Z."/>
            <person name="Chen Y."/>
            <person name="Ge C."/>
            <person name="Yang S."/>
            <person name="Gu J."/>
        </authorList>
    </citation>
    <scope>NUCLEOTIDE SEQUENCE [LARGE SCALE MRNA] OF 784-1119</scope>
    <scope>VARIANT GLY-831</scope>
</reference>
<reference key="6">
    <citation type="journal article" date="2014" name="J. Proteomics">
        <title>An enzyme assisted RP-RPLC approach for in-depth analysis of human liver phosphoproteome.</title>
        <authorList>
            <person name="Bian Y."/>
            <person name="Song C."/>
            <person name="Cheng K."/>
            <person name="Dong M."/>
            <person name="Wang F."/>
            <person name="Huang J."/>
            <person name="Sun D."/>
            <person name="Wang L."/>
            <person name="Ye M."/>
            <person name="Zou H."/>
        </authorList>
    </citation>
    <scope>PHOSPHORYLATION [LARGE SCALE ANALYSIS] AT THR-772; SER-802; SER-965 AND SER-997</scope>
    <scope>IDENTIFICATION BY MASS SPECTROMETRY [LARGE SCALE ANALYSIS]</scope>
    <source>
        <tissue>Liver</tissue>
    </source>
</reference>
<sequence length="1119" mass="119762">MTAAAASNWGLITNIVNSIVGVSVLTMPFCFKQCGIVLGALLLVFCSWMTHQSCMFLVKSASLSKRRTYAGLAFHAYGKAGKMLVETSMIGLMLGTCIAFYVVIGDLGSNFFARLFGFQVGGTFRMFLLFAVSLCIVLPLSLQRNMMASIQSFSAMALLFYTVFMFVIVLSSLKHGLFSGQWLRRVSYVRWEGVFRCIPIFGMSFACQSQVLPTYDSLDEPSVKTMSSIFASSLNVVTTFYVMVGFFGYVSFTEATAGNVLMHFPSNLVTEMLRVGFMMSVAVGFPMMILPCRQALSTLLCEQQQKDGTFAAGGYMPPLRFKALTLSVVFGTMVGGILIPNVETILGLTGATMGSLICFICPALIYKKIHKNALSSQVVLWVGLGVLVVSTVTTLSVSEEVPEDLAEEAPGGRLGEAEGLMKVEAARLSAQDPVVAVAEDGREKPKLPKEREELEQAQIKGPVDVPGREDGKEAPEEAQLDRPGQGIAVPVGEAHRHEPPVPHDKVVVDEGQDREVPEENKPPSRHAGGKAPGVQGQMAPPLPDSEREKQEPEQGEVGKRPGQAQALEEAGDLPEDPQKVPEADGQPAVQPAKEDLGPGDRGLHPRPQAVLSEQQNGLAVGGGEKAKGGPPPGNAAGDTGQPAEDSDHGGKPPLPAEKPAPGPGLPPEPREQRDVERAGGNQAASQLEEAGRAEMLDHAVLLQVIKEQQVQQKRLLDQQEKLLAVIEEQHKEIHQQRQEDEEDKPRQVEVHQEPGAAVPRGQEAPEGKARETVENLPPLPLDPVLRAPGGRPAPSQDLNQRSLEHSEGPVGRDPAGPPDGGPDTEPRAAQAKLRDGQKDAAPRAAGTVKELPKGPEQVPVPDPAREAGGPEERLAEEFPGQSQDVTGGSQDRKKPGKEVAATGTSILKEANWLVAGPGAETGDPRMKPKQVSRDLGLAADLPGGAEGAAAQPQAVLRQPELRVISDGEQGGQQGHRLDHGGHLEMRKARGGDHVPVSHEQPRGGEDAAVQEPRQRPEPELGLKRAVPGGQRPDNAKPNRDLKLQAGSDLRRRRRDLGPHAEGQLAPRDGVIIGLNPLPDVQVNDLRGALDAQLRQAAGGALQVVHSRQLRQAPGPPEES</sequence>
<protein>
    <recommendedName>
        <fullName evidence="2">Solute carrier family 38 member 10</fullName>
    </recommendedName>
    <alternativeName>
        <fullName evidence="2">Amino acid transporter SLC38A10</fullName>
    </alternativeName>
</protein>
<comment type="function">
    <text evidence="2">Facilitates bidirectional transport of amino acids. May act as a glutamate sensor that regulates glutamate-glutamine cycle and mTOR signaling in the brain. The transport mechanism remains to be elucidated.</text>
</comment>
<comment type="catalytic activity">
    <reaction evidence="2">
        <text>L-glutamate(out) = L-glutamate(in)</text>
        <dbReference type="Rhea" id="RHEA:66336"/>
        <dbReference type="ChEBI" id="CHEBI:29985"/>
    </reaction>
    <physiologicalReaction direction="left-to-right" evidence="2">
        <dbReference type="Rhea" id="RHEA:66337"/>
    </physiologicalReaction>
    <physiologicalReaction direction="right-to-left" evidence="2">
        <dbReference type="Rhea" id="RHEA:66338"/>
    </physiologicalReaction>
</comment>
<comment type="catalytic activity">
    <reaction evidence="2">
        <text>L-glutamine(out) = L-glutamine(in)</text>
        <dbReference type="Rhea" id="RHEA:73419"/>
        <dbReference type="ChEBI" id="CHEBI:58359"/>
    </reaction>
    <physiologicalReaction direction="left-to-right" evidence="2">
        <dbReference type="Rhea" id="RHEA:73420"/>
    </physiologicalReaction>
    <physiologicalReaction direction="right-to-left" evidence="2">
        <dbReference type="Rhea" id="RHEA:73421"/>
    </physiologicalReaction>
</comment>
<comment type="catalytic activity">
    <reaction evidence="2">
        <text>L-alanine(in) = L-alanine(out)</text>
        <dbReference type="Rhea" id="RHEA:70719"/>
        <dbReference type="ChEBI" id="CHEBI:57972"/>
    </reaction>
    <physiologicalReaction direction="left-to-right" evidence="2">
        <dbReference type="Rhea" id="RHEA:70720"/>
    </physiologicalReaction>
    <physiologicalReaction direction="right-to-left" evidence="2">
        <dbReference type="Rhea" id="RHEA:70721"/>
    </physiologicalReaction>
</comment>
<comment type="catalytic activity">
    <reaction evidence="2">
        <text>L-serine(in) = L-serine(out)</text>
        <dbReference type="Rhea" id="RHEA:35031"/>
        <dbReference type="ChEBI" id="CHEBI:33384"/>
    </reaction>
    <physiologicalReaction direction="left-to-right" evidence="2">
        <dbReference type="Rhea" id="RHEA:35032"/>
    </physiologicalReaction>
</comment>
<comment type="catalytic activity">
    <reaction evidence="2">
        <text>L-leucine(in) = L-leucine(out)</text>
        <dbReference type="Rhea" id="RHEA:73011"/>
        <dbReference type="ChEBI" id="CHEBI:57427"/>
    </reaction>
    <physiologicalReaction direction="right-to-left" evidence="2">
        <dbReference type="Rhea" id="RHEA:73013"/>
    </physiologicalReaction>
</comment>
<comment type="subcellular location">
    <subcellularLocation>
        <location evidence="8">Membrane</location>
        <topology evidence="8">Multi-pass membrane protein</topology>
    </subcellularLocation>
</comment>
<comment type="alternative products">
    <event type="alternative splicing"/>
    <isoform>
        <id>Q9HBR0-1</id>
        <name>1</name>
        <sequence type="displayed"/>
    </isoform>
    <isoform>
        <id>Q9HBR0-2</id>
        <name>2</name>
        <sequence type="described" ref="VSP_031324 VSP_031327"/>
    </isoform>
    <isoform>
        <id>Q9HBR0-3</id>
        <name>3</name>
        <sequence type="described" ref="VSP_031323 VSP_031325 VSP_031326"/>
    </isoform>
</comment>
<comment type="similarity">
    <text evidence="8">Belongs to the amino acid/polyamine transporter 2 family.</text>
</comment>
<comment type="sequence caution" evidence="8">
    <conflict type="erroneous initiation">
        <sequence resource="EMBL-CDS" id="AAG17235"/>
    </conflict>
</comment>
<comment type="sequence caution" evidence="8">
    <conflict type="erroneous initiation">
        <sequence resource="EMBL-CDS" id="BAC04027"/>
    </conflict>
</comment>
<organism>
    <name type="scientific">Homo sapiens</name>
    <name type="common">Human</name>
    <dbReference type="NCBI Taxonomy" id="9606"/>
    <lineage>
        <taxon>Eukaryota</taxon>
        <taxon>Metazoa</taxon>
        <taxon>Chordata</taxon>
        <taxon>Craniata</taxon>
        <taxon>Vertebrata</taxon>
        <taxon>Euteleostomi</taxon>
        <taxon>Mammalia</taxon>
        <taxon>Eutheria</taxon>
        <taxon>Euarchontoglires</taxon>
        <taxon>Primates</taxon>
        <taxon>Haplorrhini</taxon>
        <taxon>Catarrhini</taxon>
        <taxon>Hominidae</taxon>
        <taxon>Homo</taxon>
    </lineage>
</organism>
<proteinExistence type="evidence at protein level"/>
<keyword id="KW-0025">Alternative splicing</keyword>
<keyword id="KW-0029">Amino-acid transport</keyword>
<keyword id="KW-0472">Membrane</keyword>
<keyword id="KW-0597">Phosphoprotein</keyword>
<keyword id="KW-1267">Proteomics identification</keyword>
<keyword id="KW-1185">Reference proteome</keyword>
<keyword id="KW-0812">Transmembrane</keyword>
<keyword id="KW-1133">Transmembrane helix</keyword>
<keyword id="KW-0813">Transport</keyword>